<reference key="1">
    <citation type="journal article" date="2002" name="Proc. Natl. Acad. Sci. U.S.A.">
        <title>Complete genome sequence of Clostridium perfringens, an anaerobic flesh-eater.</title>
        <authorList>
            <person name="Shimizu T."/>
            <person name="Ohtani K."/>
            <person name="Hirakawa H."/>
            <person name="Ohshima K."/>
            <person name="Yamashita A."/>
            <person name="Shiba T."/>
            <person name="Ogasawara N."/>
            <person name="Hattori M."/>
            <person name="Kuhara S."/>
            <person name="Hayashi H."/>
        </authorList>
    </citation>
    <scope>NUCLEOTIDE SEQUENCE [LARGE SCALE GENOMIC DNA]</scope>
    <source>
        <strain>13 / Type A</strain>
    </source>
</reference>
<protein>
    <recommendedName>
        <fullName evidence="1">UDP-N-acetylenolpyruvoylglucosamine reductase</fullName>
        <ecNumber evidence="1">1.3.1.98</ecNumber>
    </recommendedName>
    <alternativeName>
        <fullName evidence="1">UDP-N-acetylmuramate dehydrogenase</fullName>
    </alternativeName>
</protein>
<dbReference type="EC" id="1.3.1.98" evidence="1"/>
<dbReference type="EMBL" id="BA000016">
    <property type="protein sequence ID" value="BAB80059.1"/>
    <property type="molecule type" value="Genomic_DNA"/>
</dbReference>
<dbReference type="RefSeq" id="WP_003457971.1">
    <property type="nucleotide sequence ID" value="NC_003366.1"/>
</dbReference>
<dbReference type="SMR" id="Q8XNI0"/>
<dbReference type="STRING" id="195102.gene:10489609"/>
<dbReference type="GeneID" id="93003312"/>
<dbReference type="KEGG" id="cpe:CPE0353"/>
<dbReference type="HOGENOM" id="CLU_035304_1_1_9"/>
<dbReference type="UniPathway" id="UPA00219"/>
<dbReference type="Proteomes" id="UP000000818">
    <property type="component" value="Chromosome"/>
</dbReference>
<dbReference type="GO" id="GO:0005829">
    <property type="term" value="C:cytosol"/>
    <property type="evidence" value="ECO:0007669"/>
    <property type="project" value="TreeGrafter"/>
</dbReference>
<dbReference type="GO" id="GO:0071949">
    <property type="term" value="F:FAD binding"/>
    <property type="evidence" value="ECO:0007669"/>
    <property type="project" value="InterPro"/>
</dbReference>
<dbReference type="GO" id="GO:0008762">
    <property type="term" value="F:UDP-N-acetylmuramate dehydrogenase activity"/>
    <property type="evidence" value="ECO:0007669"/>
    <property type="project" value="UniProtKB-UniRule"/>
</dbReference>
<dbReference type="GO" id="GO:0051301">
    <property type="term" value="P:cell division"/>
    <property type="evidence" value="ECO:0007669"/>
    <property type="project" value="UniProtKB-KW"/>
</dbReference>
<dbReference type="GO" id="GO:0071555">
    <property type="term" value="P:cell wall organization"/>
    <property type="evidence" value="ECO:0007669"/>
    <property type="project" value="UniProtKB-KW"/>
</dbReference>
<dbReference type="GO" id="GO:0009252">
    <property type="term" value="P:peptidoglycan biosynthetic process"/>
    <property type="evidence" value="ECO:0007669"/>
    <property type="project" value="UniProtKB-UniRule"/>
</dbReference>
<dbReference type="GO" id="GO:0008360">
    <property type="term" value="P:regulation of cell shape"/>
    <property type="evidence" value="ECO:0007669"/>
    <property type="project" value="UniProtKB-KW"/>
</dbReference>
<dbReference type="Gene3D" id="3.30.465.10">
    <property type="match status" value="1"/>
</dbReference>
<dbReference type="Gene3D" id="3.90.78.10">
    <property type="entry name" value="UDP-N-acetylenolpyruvoylglucosamine reductase, C-terminal domain"/>
    <property type="match status" value="1"/>
</dbReference>
<dbReference type="Gene3D" id="3.30.43.10">
    <property type="entry name" value="Uridine Diphospho-n-acetylenolpyruvylglucosamine Reductase, domain 2"/>
    <property type="match status" value="1"/>
</dbReference>
<dbReference type="HAMAP" id="MF_00037">
    <property type="entry name" value="MurB"/>
    <property type="match status" value="1"/>
</dbReference>
<dbReference type="InterPro" id="IPR016166">
    <property type="entry name" value="FAD-bd_PCMH"/>
</dbReference>
<dbReference type="InterPro" id="IPR036318">
    <property type="entry name" value="FAD-bd_PCMH-like_sf"/>
</dbReference>
<dbReference type="InterPro" id="IPR016167">
    <property type="entry name" value="FAD-bd_PCMH_sub1"/>
</dbReference>
<dbReference type="InterPro" id="IPR016169">
    <property type="entry name" value="FAD-bd_PCMH_sub2"/>
</dbReference>
<dbReference type="InterPro" id="IPR003170">
    <property type="entry name" value="MurB"/>
</dbReference>
<dbReference type="InterPro" id="IPR011601">
    <property type="entry name" value="MurB_C"/>
</dbReference>
<dbReference type="InterPro" id="IPR036635">
    <property type="entry name" value="MurB_C_sf"/>
</dbReference>
<dbReference type="InterPro" id="IPR006094">
    <property type="entry name" value="Oxid_FAD_bind_N"/>
</dbReference>
<dbReference type="NCBIfam" id="TIGR00179">
    <property type="entry name" value="murB"/>
    <property type="match status" value="1"/>
</dbReference>
<dbReference type="NCBIfam" id="NF010480">
    <property type="entry name" value="PRK13905.1"/>
    <property type="match status" value="1"/>
</dbReference>
<dbReference type="PANTHER" id="PTHR21071">
    <property type="entry name" value="UDP-N-ACETYLENOLPYRUVOYLGLUCOSAMINE REDUCTASE"/>
    <property type="match status" value="1"/>
</dbReference>
<dbReference type="PANTHER" id="PTHR21071:SF4">
    <property type="entry name" value="UDP-N-ACETYLENOLPYRUVOYLGLUCOSAMINE REDUCTASE"/>
    <property type="match status" value="1"/>
</dbReference>
<dbReference type="Pfam" id="PF01565">
    <property type="entry name" value="FAD_binding_4"/>
    <property type="match status" value="1"/>
</dbReference>
<dbReference type="Pfam" id="PF02873">
    <property type="entry name" value="MurB_C"/>
    <property type="match status" value="1"/>
</dbReference>
<dbReference type="SUPFAM" id="SSF56176">
    <property type="entry name" value="FAD-binding/transporter-associated domain-like"/>
    <property type="match status" value="1"/>
</dbReference>
<dbReference type="SUPFAM" id="SSF56194">
    <property type="entry name" value="Uridine diphospho-N-Acetylenolpyruvylglucosamine reductase, MurB, C-terminal domain"/>
    <property type="match status" value="1"/>
</dbReference>
<dbReference type="PROSITE" id="PS51387">
    <property type="entry name" value="FAD_PCMH"/>
    <property type="match status" value="1"/>
</dbReference>
<feature type="chain" id="PRO_0000179200" description="UDP-N-acetylenolpyruvoylglucosamine reductase">
    <location>
        <begin position="1"/>
        <end position="304"/>
    </location>
</feature>
<feature type="domain" description="FAD-binding PCMH-type" evidence="1">
    <location>
        <begin position="33"/>
        <end position="198"/>
    </location>
</feature>
<feature type="active site" evidence="1">
    <location>
        <position position="177"/>
    </location>
</feature>
<feature type="active site" description="Proton donor" evidence="1">
    <location>
        <position position="227"/>
    </location>
</feature>
<feature type="active site" evidence="1">
    <location>
        <position position="297"/>
    </location>
</feature>
<evidence type="ECO:0000255" key="1">
    <source>
        <dbReference type="HAMAP-Rule" id="MF_00037"/>
    </source>
</evidence>
<proteinExistence type="inferred from homology"/>
<organism>
    <name type="scientific">Clostridium perfringens (strain 13 / Type A)</name>
    <dbReference type="NCBI Taxonomy" id="195102"/>
    <lineage>
        <taxon>Bacteria</taxon>
        <taxon>Bacillati</taxon>
        <taxon>Bacillota</taxon>
        <taxon>Clostridia</taxon>
        <taxon>Eubacteriales</taxon>
        <taxon>Clostridiaceae</taxon>
        <taxon>Clostridium</taxon>
    </lineage>
</organism>
<gene>
    <name evidence="1" type="primary">murB</name>
    <name type="ordered locus">CPE0353</name>
</gene>
<accession>Q8XNI0</accession>
<sequence>MNQYMEFYKLLGEFYNEEDITVDSPMSEHIYFRVGGPADILVTPVNEEQVVNTLKLCREYNVPYFILGNGSNILVKDGGISGVVIKFNKLNKITTEGNCVTAQSGALLKDVSKAALENNLRGFEFACGIPGSIGGAVFMNAGAYDGEMAHVIKSARVIDENCNIKNLTKEELELGYRSSIVMKKGYVVIEATVELESGEYASIKDKIDDLTNRRESKQPLEYPSAGSTFKRPEGYFAGKLIQDSGLKGFSIGGAAVSEKHSGFVINKGGATAKDVLDVIAHVQKTVKENFDVELHTEVRIIGRD</sequence>
<comment type="function">
    <text evidence="1">Cell wall formation.</text>
</comment>
<comment type="catalytic activity">
    <reaction evidence="1">
        <text>UDP-N-acetyl-alpha-D-muramate + NADP(+) = UDP-N-acetyl-3-O-(1-carboxyvinyl)-alpha-D-glucosamine + NADPH + H(+)</text>
        <dbReference type="Rhea" id="RHEA:12248"/>
        <dbReference type="ChEBI" id="CHEBI:15378"/>
        <dbReference type="ChEBI" id="CHEBI:57783"/>
        <dbReference type="ChEBI" id="CHEBI:58349"/>
        <dbReference type="ChEBI" id="CHEBI:68483"/>
        <dbReference type="ChEBI" id="CHEBI:70757"/>
        <dbReference type="EC" id="1.3.1.98"/>
    </reaction>
</comment>
<comment type="cofactor">
    <cofactor evidence="1">
        <name>FAD</name>
        <dbReference type="ChEBI" id="CHEBI:57692"/>
    </cofactor>
</comment>
<comment type="pathway">
    <text evidence="1">Cell wall biogenesis; peptidoglycan biosynthesis.</text>
</comment>
<comment type="subcellular location">
    <subcellularLocation>
        <location evidence="1">Cytoplasm</location>
    </subcellularLocation>
</comment>
<comment type="similarity">
    <text evidence="1">Belongs to the MurB family.</text>
</comment>
<keyword id="KW-0131">Cell cycle</keyword>
<keyword id="KW-0132">Cell division</keyword>
<keyword id="KW-0133">Cell shape</keyword>
<keyword id="KW-0961">Cell wall biogenesis/degradation</keyword>
<keyword id="KW-0963">Cytoplasm</keyword>
<keyword id="KW-0274">FAD</keyword>
<keyword id="KW-0285">Flavoprotein</keyword>
<keyword id="KW-0521">NADP</keyword>
<keyword id="KW-0560">Oxidoreductase</keyword>
<keyword id="KW-0573">Peptidoglycan synthesis</keyword>
<keyword id="KW-1185">Reference proteome</keyword>
<name>MURB_CLOPE</name>